<accession>Q33101</accession>
<feature type="chain" id="PRO_0000062596" description="Ribulose bisphosphate carboxylase large chain">
    <location>
        <begin position="1" status="less than"/>
        <end position="468"/>
    </location>
</feature>
<feature type="active site" description="Proton acceptor" evidence="1">
    <location>
        <position position="166"/>
    </location>
</feature>
<feature type="active site" description="Proton acceptor" evidence="1">
    <location>
        <position position="285"/>
    </location>
</feature>
<feature type="binding site" description="in homodimeric partner" evidence="1">
    <location>
        <position position="114"/>
    </location>
    <ligand>
        <name>substrate</name>
    </ligand>
</feature>
<feature type="binding site" evidence="1">
    <location>
        <position position="164"/>
    </location>
    <ligand>
        <name>substrate</name>
    </ligand>
</feature>
<feature type="binding site" evidence="1">
    <location>
        <position position="168"/>
    </location>
    <ligand>
        <name>substrate</name>
    </ligand>
</feature>
<feature type="binding site" description="via carbamate group" evidence="1">
    <location>
        <position position="192"/>
    </location>
    <ligand>
        <name>Mg(2+)</name>
        <dbReference type="ChEBI" id="CHEBI:18420"/>
    </ligand>
</feature>
<feature type="binding site" evidence="1">
    <location>
        <position position="194"/>
    </location>
    <ligand>
        <name>Mg(2+)</name>
        <dbReference type="ChEBI" id="CHEBI:18420"/>
    </ligand>
</feature>
<feature type="binding site" evidence="1">
    <location>
        <position position="195"/>
    </location>
    <ligand>
        <name>Mg(2+)</name>
        <dbReference type="ChEBI" id="CHEBI:18420"/>
    </ligand>
</feature>
<feature type="binding site" evidence="1">
    <location>
        <position position="286"/>
    </location>
    <ligand>
        <name>substrate</name>
    </ligand>
</feature>
<feature type="binding site" evidence="1">
    <location>
        <position position="318"/>
    </location>
    <ligand>
        <name>substrate</name>
    </ligand>
</feature>
<feature type="binding site" evidence="1">
    <location>
        <position position="370"/>
    </location>
    <ligand>
        <name>substrate</name>
    </ligand>
</feature>
<feature type="site" description="Transition state stabilizer" evidence="1">
    <location>
        <position position="325"/>
    </location>
</feature>
<feature type="modified residue" description="N6,N6,N6-trimethyllysine" evidence="1">
    <location>
        <position position="5"/>
    </location>
</feature>
<feature type="modified residue" description="N6-carboxylysine" evidence="1">
    <location>
        <position position="192"/>
    </location>
</feature>
<feature type="disulfide bond" description="Interchain; in linked form" evidence="1">
    <location>
        <position position="238"/>
    </location>
</feature>
<feature type="non-terminal residue">
    <location>
        <position position="1"/>
    </location>
</feature>
<proteinExistence type="inferred from homology"/>
<comment type="function">
    <text evidence="1">RuBisCO catalyzes two reactions: the carboxylation of D-ribulose 1,5-bisphosphate, the primary event in carbon dioxide fixation, as well as the oxidative fragmentation of the pentose substrate in the photorespiration process. Both reactions occur simultaneously and in competition at the same active site.</text>
</comment>
<comment type="catalytic activity">
    <reaction evidence="1">
        <text>2 (2R)-3-phosphoglycerate + 2 H(+) = D-ribulose 1,5-bisphosphate + CO2 + H2O</text>
        <dbReference type="Rhea" id="RHEA:23124"/>
        <dbReference type="ChEBI" id="CHEBI:15377"/>
        <dbReference type="ChEBI" id="CHEBI:15378"/>
        <dbReference type="ChEBI" id="CHEBI:16526"/>
        <dbReference type="ChEBI" id="CHEBI:57870"/>
        <dbReference type="ChEBI" id="CHEBI:58272"/>
        <dbReference type="EC" id="4.1.1.39"/>
    </reaction>
</comment>
<comment type="catalytic activity">
    <reaction evidence="1">
        <text>D-ribulose 1,5-bisphosphate + O2 = 2-phosphoglycolate + (2R)-3-phosphoglycerate + 2 H(+)</text>
        <dbReference type="Rhea" id="RHEA:36631"/>
        <dbReference type="ChEBI" id="CHEBI:15378"/>
        <dbReference type="ChEBI" id="CHEBI:15379"/>
        <dbReference type="ChEBI" id="CHEBI:57870"/>
        <dbReference type="ChEBI" id="CHEBI:58033"/>
        <dbReference type="ChEBI" id="CHEBI:58272"/>
    </reaction>
</comment>
<comment type="cofactor">
    <cofactor evidence="1">
        <name>Mg(2+)</name>
        <dbReference type="ChEBI" id="CHEBI:18420"/>
    </cofactor>
    <text evidence="1">Binds 1 Mg(2+) ion per subunit.</text>
</comment>
<comment type="subunit">
    <text evidence="1">Heterohexadecamer of 8 large chains and 8 small chains; disulfide-linked. The disulfide link is formed within the large subunit homodimers.</text>
</comment>
<comment type="subcellular location">
    <subcellularLocation>
        <location>Plastid</location>
        <location>Chloroplast</location>
    </subcellularLocation>
</comment>
<comment type="PTM">
    <text evidence="1">The disulfide bond which can form in the large chain dimeric partners within the hexadecamer appears to be associated with oxidative stress and protein turnover.</text>
</comment>
<comment type="miscellaneous">
    <text evidence="1">The basic functional RuBisCO is composed of a large chain homodimer in a 'head-to-tail' conformation. In form I RuBisCO this homodimer is arranged in a barrel-like tetramer with the small subunits forming a tetrameric 'cap' on each end of the 'barrel'.</text>
</comment>
<comment type="similarity">
    <text evidence="1">Belongs to the RuBisCO large chain family. Type I subfamily.</text>
</comment>
<name>RBL_SOLGR</name>
<gene>
    <name evidence="1" type="primary">rbcL</name>
</gene>
<organism>
    <name type="scientific">Solandra grandiflora</name>
    <name type="common">Chalice vine</name>
    <name type="synonym">Swartzia grandiflora</name>
    <dbReference type="NCBI Taxonomy" id="33123"/>
    <lineage>
        <taxon>Eukaryota</taxon>
        <taxon>Viridiplantae</taxon>
        <taxon>Streptophyta</taxon>
        <taxon>Embryophyta</taxon>
        <taxon>Tracheophyta</taxon>
        <taxon>Spermatophyta</taxon>
        <taxon>Magnoliopsida</taxon>
        <taxon>eudicotyledons</taxon>
        <taxon>Gunneridae</taxon>
        <taxon>Pentapetalae</taxon>
        <taxon>asterids</taxon>
        <taxon>lamiids</taxon>
        <taxon>Solanales</taxon>
        <taxon>Solanaceae</taxon>
        <taxon>Solanoideae</taxon>
        <taxon>Solandreae</taxon>
        <taxon>Solandra</taxon>
    </lineage>
</organism>
<dbReference type="EC" id="4.1.1.39" evidence="1"/>
<dbReference type="EMBL" id="U08620">
    <property type="protein sequence ID" value="AAA18395.1"/>
    <property type="molecule type" value="Genomic_DNA"/>
</dbReference>
<dbReference type="SMR" id="Q33101"/>
<dbReference type="GO" id="GO:0009507">
    <property type="term" value="C:chloroplast"/>
    <property type="evidence" value="ECO:0007669"/>
    <property type="project" value="UniProtKB-SubCell"/>
</dbReference>
<dbReference type="GO" id="GO:0000287">
    <property type="term" value="F:magnesium ion binding"/>
    <property type="evidence" value="ECO:0007669"/>
    <property type="project" value="InterPro"/>
</dbReference>
<dbReference type="GO" id="GO:0004497">
    <property type="term" value="F:monooxygenase activity"/>
    <property type="evidence" value="ECO:0007669"/>
    <property type="project" value="UniProtKB-KW"/>
</dbReference>
<dbReference type="GO" id="GO:0016984">
    <property type="term" value="F:ribulose-bisphosphate carboxylase activity"/>
    <property type="evidence" value="ECO:0007669"/>
    <property type="project" value="UniProtKB-EC"/>
</dbReference>
<dbReference type="GO" id="GO:0009853">
    <property type="term" value="P:photorespiration"/>
    <property type="evidence" value="ECO:0007669"/>
    <property type="project" value="UniProtKB-KW"/>
</dbReference>
<dbReference type="GO" id="GO:0019253">
    <property type="term" value="P:reductive pentose-phosphate cycle"/>
    <property type="evidence" value="ECO:0007669"/>
    <property type="project" value="UniProtKB-KW"/>
</dbReference>
<dbReference type="CDD" id="cd08212">
    <property type="entry name" value="RuBisCO_large_I"/>
    <property type="match status" value="1"/>
</dbReference>
<dbReference type="FunFam" id="3.20.20.110:FF:000001">
    <property type="entry name" value="Ribulose bisphosphate carboxylase large chain"/>
    <property type="match status" value="1"/>
</dbReference>
<dbReference type="FunFam" id="3.30.70.150:FF:000001">
    <property type="entry name" value="Ribulose bisphosphate carboxylase large chain"/>
    <property type="match status" value="1"/>
</dbReference>
<dbReference type="Gene3D" id="3.20.20.110">
    <property type="entry name" value="Ribulose bisphosphate carboxylase, large subunit, C-terminal domain"/>
    <property type="match status" value="1"/>
</dbReference>
<dbReference type="Gene3D" id="3.30.70.150">
    <property type="entry name" value="RuBisCO large subunit, N-terminal domain"/>
    <property type="match status" value="1"/>
</dbReference>
<dbReference type="HAMAP" id="MF_01338">
    <property type="entry name" value="RuBisCO_L_type1"/>
    <property type="match status" value="1"/>
</dbReference>
<dbReference type="InterPro" id="IPR033966">
    <property type="entry name" value="RuBisCO"/>
</dbReference>
<dbReference type="InterPro" id="IPR020878">
    <property type="entry name" value="RuBisCo_large_chain_AS"/>
</dbReference>
<dbReference type="InterPro" id="IPR000685">
    <property type="entry name" value="RuBisCO_lsu_C"/>
</dbReference>
<dbReference type="InterPro" id="IPR036376">
    <property type="entry name" value="RuBisCO_lsu_C_sf"/>
</dbReference>
<dbReference type="InterPro" id="IPR017443">
    <property type="entry name" value="RuBisCO_lsu_fd_N"/>
</dbReference>
<dbReference type="InterPro" id="IPR036422">
    <property type="entry name" value="RuBisCO_lsu_N_sf"/>
</dbReference>
<dbReference type="InterPro" id="IPR020888">
    <property type="entry name" value="RuBisCO_lsuI"/>
</dbReference>
<dbReference type="NCBIfam" id="NF003252">
    <property type="entry name" value="PRK04208.1"/>
    <property type="match status" value="1"/>
</dbReference>
<dbReference type="PANTHER" id="PTHR42704">
    <property type="entry name" value="RIBULOSE BISPHOSPHATE CARBOXYLASE"/>
    <property type="match status" value="1"/>
</dbReference>
<dbReference type="PANTHER" id="PTHR42704:SF16">
    <property type="entry name" value="RIBULOSE BISPHOSPHATE CARBOXYLASE LARGE CHAIN"/>
    <property type="match status" value="1"/>
</dbReference>
<dbReference type="Pfam" id="PF00016">
    <property type="entry name" value="RuBisCO_large"/>
    <property type="match status" value="1"/>
</dbReference>
<dbReference type="Pfam" id="PF02788">
    <property type="entry name" value="RuBisCO_large_N"/>
    <property type="match status" value="1"/>
</dbReference>
<dbReference type="SFLD" id="SFLDG01052">
    <property type="entry name" value="RuBisCO"/>
    <property type="match status" value="1"/>
</dbReference>
<dbReference type="SFLD" id="SFLDS00014">
    <property type="entry name" value="RuBisCO"/>
    <property type="match status" value="1"/>
</dbReference>
<dbReference type="SFLD" id="SFLDG00301">
    <property type="entry name" value="RuBisCO-like_proteins"/>
    <property type="match status" value="1"/>
</dbReference>
<dbReference type="SUPFAM" id="SSF51649">
    <property type="entry name" value="RuBisCo, C-terminal domain"/>
    <property type="match status" value="1"/>
</dbReference>
<dbReference type="SUPFAM" id="SSF54966">
    <property type="entry name" value="RuBisCO, large subunit, small (N-terminal) domain"/>
    <property type="match status" value="1"/>
</dbReference>
<dbReference type="PROSITE" id="PS00157">
    <property type="entry name" value="RUBISCO_LARGE"/>
    <property type="match status" value="1"/>
</dbReference>
<keyword id="KW-0113">Calvin cycle</keyword>
<keyword id="KW-0120">Carbon dioxide fixation</keyword>
<keyword id="KW-0150">Chloroplast</keyword>
<keyword id="KW-1015">Disulfide bond</keyword>
<keyword id="KW-0456">Lyase</keyword>
<keyword id="KW-0460">Magnesium</keyword>
<keyword id="KW-0479">Metal-binding</keyword>
<keyword id="KW-0488">Methylation</keyword>
<keyword id="KW-0503">Monooxygenase</keyword>
<keyword id="KW-0560">Oxidoreductase</keyword>
<keyword id="KW-0601">Photorespiration</keyword>
<keyword id="KW-0602">Photosynthesis</keyword>
<keyword id="KW-0934">Plastid</keyword>
<reference key="1">
    <citation type="journal article" date="1994" name="Syst. Biol.">
        <title>Combining data in phylogenetic systematics: an empirical approach using three molecular data sets in the Solanaceae.</title>
        <authorList>
            <person name="Olmstead R.G."/>
            <person name="Sweere J.A."/>
        </authorList>
    </citation>
    <scope>NUCLEOTIDE SEQUENCE [GENOMIC DNA]</scope>
</reference>
<sequence length="468" mass="51940">SVGFKAGVKEYKLTYYTPEYQTKDTDILAAFRVTPQPGVPPEEAGAAVAAESSTGTWTTVWTDGLTSLDRYKGRCYRIERVVGEKDQYIAYVAYPLDLFEEGSVTNMFTSIVGNVFGFKALRALRLEDLRIPPAYIKTFQGPPHGIQVERDKLNKYGRPLLGCTIKPKLGLSAKNYGRAVYECLRGGLDFTKDDENVNSQPFMRWRDRFLFCAEALYKAQAETGEIKGHYLNATAGTCEEMIKRAVFARELGVPIVMHDYLTGGFTANTSLAHYCRDNGLLLHIHRAMHAVIDRQKNHGMHFRVLAKALRMSGGDHIHAGTVVGKLEGERDITLGFVDLLRDDFVEQDRSRGIYFTQDWVSLPGVLPVASGGIHVWHMPALTEIFGDDSVLQFGGGTLGHPWGNAPGAVANRVALEACVKARNEGRDLAQEGNEIIREACKWSPELAAACEVWKEIVFNFAAVDVLDK</sequence>
<protein>
    <recommendedName>
        <fullName evidence="1">Ribulose bisphosphate carboxylase large chain</fullName>
        <shortName evidence="1">RuBisCO large subunit</shortName>
        <ecNumber evidence="1">4.1.1.39</ecNumber>
    </recommendedName>
</protein>
<geneLocation type="chloroplast"/>
<evidence type="ECO:0000255" key="1">
    <source>
        <dbReference type="HAMAP-Rule" id="MF_01338"/>
    </source>
</evidence>